<comment type="function">
    <text evidence="1">Transcription factor required for myelination of differentiated oligodendrocytes. Required for the conversion of oligodendrocytes from the premyelinating to the myelinating state. In the developing central nervous system (CNS), involved in the maintenance in the progenitor stage by promoting the cell cycle. Specifically binds to the 5'-TCAT-3' DNA sequence. Has transcription repressor activity in vitro (By similarity).</text>
</comment>
<comment type="subcellular location">
    <subcellularLocation>
        <location evidence="4">Nucleus</location>
    </subcellularLocation>
</comment>
<comment type="PTM">
    <text evidence="1">Sumoylated.</text>
</comment>
<comment type="similarity">
    <text evidence="5">Belongs to the krueppel C2H2-type zinc-finger protein family.</text>
</comment>
<sequence length="368" mass="42017">MSAQSVEEDSILIIPTPDEEEKILRVKLEEDPDGEEGSSIPWNHLPDPEIFRQRFRQFGYQDSPGPREAVSQLRELCRLWLRPETHTKEQILELVVLEQFVAILPKELQTWVRDHHPENGEEAVTVLEDLESELDDPGQPVSLRRRKREVLVEDMVSQEEAQGLPSSELDAVENQLKWASWELHSLRHCDDDGRTENGALAPKQELPSAVESHEVPGTLNMGVPQIFKYGETCFPKGRFERKRNPSRKKQHICDECGKHFSQGSALILHQRIHSGEKPYGCVECGKAFSRSSILVQHQRVHTGEKPYKCLECGKAFSQNSGLINHQRIHTGEKPYECVQCGKSYSQSSNLFRHXXXHNAXKLLNVVKV</sequence>
<dbReference type="EMBL" id="DQ977287">
    <property type="protein sequence ID" value="ABM54419.1"/>
    <property type="molecule type" value="Genomic_DNA"/>
</dbReference>
<dbReference type="STRING" id="9597.ENSPPAP00000003157"/>
<dbReference type="eggNOG" id="KOG1721">
    <property type="taxonomic scope" value="Eukaryota"/>
</dbReference>
<dbReference type="Proteomes" id="UP000240080">
    <property type="component" value="Unplaced"/>
</dbReference>
<dbReference type="GO" id="GO:0005634">
    <property type="term" value="C:nucleus"/>
    <property type="evidence" value="ECO:0000250"/>
    <property type="project" value="UniProtKB"/>
</dbReference>
<dbReference type="GO" id="GO:0043565">
    <property type="term" value="F:sequence-specific DNA binding"/>
    <property type="evidence" value="ECO:0000250"/>
    <property type="project" value="UniProtKB"/>
</dbReference>
<dbReference type="GO" id="GO:0008270">
    <property type="term" value="F:zinc ion binding"/>
    <property type="evidence" value="ECO:0007669"/>
    <property type="project" value="UniProtKB-KW"/>
</dbReference>
<dbReference type="GO" id="GO:0042552">
    <property type="term" value="P:myelination"/>
    <property type="evidence" value="ECO:0000250"/>
    <property type="project" value="UniProtKB"/>
</dbReference>
<dbReference type="CDD" id="cd07936">
    <property type="entry name" value="SCAN"/>
    <property type="match status" value="1"/>
</dbReference>
<dbReference type="FunFam" id="3.30.160.60:FF:000914">
    <property type="entry name" value="Zinc finger protein 16"/>
    <property type="match status" value="1"/>
</dbReference>
<dbReference type="FunFam" id="3.30.160.60:FF:000824">
    <property type="entry name" value="Zinc finger protein 184"/>
    <property type="match status" value="1"/>
</dbReference>
<dbReference type="FunFam" id="3.30.160.60:FF:000358">
    <property type="entry name" value="zinc finger protein 24"/>
    <property type="match status" value="1"/>
</dbReference>
<dbReference type="FunFam" id="3.30.160.60:FF:000632">
    <property type="entry name" value="zinc finger protein 24 isoform X1"/>
    <property type="match status" value="1"/>
</dbReference>
<dbReference type="FunFam" id="1.10.4020.10:FF:000001">
    <property type="entry name" value="zinc finger protein 263 isoform X1"/>
    <property type="match status" value="1"/>
</dbReference>
<dbReference type="Gene3D" id="3.30.160.60">
    <property type="entry name" value="Classic Zinc Finger"/>
    <property type="match status" value="4"/>
</dbReference>
<dbReference type="Gene3D" id="1.10.4020.10">
    <property type="entry name" value="DNA breaking-rejoining enzymes"/>
    <property type="match status" value="1"/>
</dbReference>
<dbReference type="InterPro" id="IPR050916">
    <property type="entry name" value="SCAN-C2H2_zinc_finger"/>
</dbReference>
<dbReference type="InterPro" id="IPR003309">
    <property type="entry name" value="SCAN_dom"/>
</dbReference>
<dbReference type="InterPro" id="IPR038269">
    <property type="entry name" value="SCAN_sf"/>
</dbReference>
<dbReference type="InterPro" id="IPR036236">
    <property type="entry name" value="Znf_C2H2_sf"/>
</dbReference>
<dbReference type="InterPro" id="IPR013087">
    <property type="entry name" value="Znf_C2H2_type"/>
</dbReference>
<dbReference type="PANTHER" id="PTHR45935">
    <property type="entry name" value="PROTEIN ZBED8-RELATED"/>
    <property type="match status" value="1"/>
</dbReference>
<dbReference type="PANTHER" id="PTHR45935:SF28">
    <property type="entry name" value="SCAN DOMAIN-CONTAINING PROTEIN 3"/>
    <property type="match status" value="1"/>
</dbReference>
<dbReference type="Pfam" id="PF02023">
    <property type="entry name" value="SCAN"/>
    <property type="match status" value="1"/>
</dbReference>
<dbReference type="Pfam" id="PF00096">
    <property type="entry name" value="zf-C2H2"/>
    <property type="match status" value="4"/>
</dbReference>
<dbReference type="SMART" id="SM00431">
    <property type="entry name" value="SCAN"/>
    <property type="match status" value="1"/>
</dbReference>
<dbReference type="SMART" id="SM00355">
    <property type="entry name" value="ZnF_C2H2"/>
    <property type="match status" value="4"/>
</dbReference>
<dbReference type="SUPFAM" id="SSF57667">
    <property type="entry name" value="beta-beta-alpha zinc fingers"/>
    <property type="match status" value="3"/>
</dbReference>
<dbReference type="SUPFAM" id="SSF47353">
    <property type="entry name" value="Retrovirus capsid dimerization domain-like"/>
    <property type="match status" value="1"/>
</dbReference>
<dbReference type="PROSITE" id="PS50804">
    <property type="entry name" value="SCAN_BOX"/>
    <property type="match status" value="1"/>
</dbReference>
<dbReference type="PROSITE" id="PS00028">
    <property type="entry name" value="ZINC_FINGER_C2H2_1"/>
    <property type="match status" value="4"/>
</dbReference>
<dbReference type="PROSITE" id="PS50157">
    <property type="entry name" value="ZINC_FINGER_C2H2_2"/>
    <property type="match status" value="4"/>
</dbReference>
<protein>
    <recommendedName>
        <fullName>Zinc finger protein 24</fullName>
    </recommendedName>
</protein>
<name>ZNF24_PANPA</name>
<feature type="chain" id="PRO_0000285468" description="Zinc finger protein 24">
    <location>
        <begin position="1"/>
        <end position="368"/>
    </location>
</feature>
<feature type="domain" description="SCAN box" evidence="4">
    <location>
        <begin position="52"/>
        <end position="134"/>
    </location>
</feature>
<feature type="zinc finger region" description="C2H2-type 1" evidence="3">
    <location>
        <begin position="251"/>
        <end position="273"/>
    </location>
</feature>
<feature type="zinc finger region" description="C2H2-type 2" evidence="3">
    <location>
        <begin position="279"/>
        <end position="301"/>
    </location>
</feature>
<feature type="zinc finger region" description="C2H2-type 3" evidence="3">
    <location>
        <begin position="307"/>
        <end position="329"/>
    </location>
</feature>
<feature type="zinc finger region" description="C2H2-type 4" evidence="3">
    <location>
        <begin position="335"/>
        <end position="357"/>
    </location>
</feature>
<feature type="region of interest" description="Necessary and sufficient for nuclear localization" evidence="1">
    <location>
        <begin position="251"/>
        <end position="301"/>
    </location>
</feature>
<feature type="modified residue" description="Phosphoserine" evidence="2">
    <location>
        <position position="132"/>
    </location>
</feature>
<feature type="modified residue" description="Phosphoserine" evidence="2">
    <location>
        <position position="142"/>
    </location>
</feature>
<feature type="modified residue" description="Phosphoserine" evidence="2">
    <location>
        <position position="274"/>
    </location>
</feature>
<feature type="modified residue" description="Phosphoserine" evidence="2">
    <location>
        <position position="292"/>
    </location>
</feature>
<feature type="modified residue" description="Phosphotyrosine" evidence="2">
    <location>
        <position position="335"/>
    </location>
</feature>
<feature type="cross-link" description="Glycyl lysine isopeptide (Lys-Gly) (interchain with G-Cter in SUMO2)" evidence="2">
    <location>
        <position position="22"/>
    </location>
</feature>
<feature type="cross-link" description="Glycyl lysine isopeptide (Lys-Gly) (interchain with G-Cter in SUMO1); alternate" evidence="2">
    <location>
        <position position="27"/>
    </location>
</feature>
<feature type="cross-link" description="Glycyl lysine isopeptide (Lys-Gly) (interchain with G-Cter in SUMO2); alternate" evidence="2">
    <location>
        <position position="27"/>
    </location>
</feature>
<feature type="cross-link" description="Glycyl lysine isopeptide (Lys-Gly) (interchain with G-Cter in SUMO2)" evidence="2">
    <location>
        <position position="147"/>
    </location>
</feature>
<feature type="cross-link" description="Glycyl lysine isopeptide (Lys-Gly) (interchain with G-Cter in SUMO2)" evidence="2">
    <location>
        <position position="177"/>
    </location>
</feature>
<feature type="cross-link" description="Glycyl lysine isopeptide (Lys-Gly) (interchain with G-Cter in SUMO2)" evidence="2">
    <location>
        <position position="236"/>
    </location>
</feature>
<feature type="cross-link" description="Glycyl lysine isopeptide (Lys-Gly) (interchain with G-Cter in SUMO2)" evidence="2">
    <location>
        <position position="277"/>
    </location>
</feature>
<feature type="cross-link" description="Glycyl lysine isopeptide (Lys-Gly) (interchain with G-Cter in SUMO2)" evidence="2">
    <location>
        <position position="286"/>
    </location>
</feature>
<feature type="cross-link" description="Glycyl lysine isopeptide (Lys-Gly) (interchain with G-Cter in SUMO2)" evidence="2">
    <location>
        <position position="361"/>
    </location>
</feature>
<feature type="cross-link" description="Glycyl lysine isopeptide (Lys-Gly) (interchain with G-Cter in SUMO2)" evidence="2">
    <location>
        <position position="367"/>
    </location>
</feature>
<proteinExistence type="inferred from homology"/>
<gene>
    <name type="primary">ZNF24</name>
</gene>
<accession>A1YGJ4</accession>
<organism>
    <name type="scientific">Pan paniscus</name>
    <name type="common">Pygmy chimpanzee</name>
    <name type="synonym">Bonobo</name>
    <dbReference type="NCBI Taxonomy" id="9597"/>
    <lineage>
        <taxon>Eukaryota</taxon>
        <taxon>Metazoa</taxon>
        <taxon>Chordata</taxon>
        <taxon>Craniata</taxon>
        <taxon>Vertebrata</taxon>
        <taxon>Euteleostomi</taxon>
        <taxon>Mammalia</taxon>
        <taxon>Eutheria</taxon>
        <taxon>Euarchontoglires</taxon>
        <taxon>Primates</taxon>
        <taxon>Haplorrhini</taxon>
        <taxon>Catarrhini</taxon>
        <taxon>Hominidae</taxon>
        <taxon>Pan</taxon>
    </lineage>
</organism>
<evidence type="ECO:0000250" key="1"/>
<evidence type="ECO:0000250" key="2">
    <source>
        <dbReference type="UniProtKB" id="P17028"/>
    </source>
</evidence>
<evidence type="ECO:0000255" key="3">
    <source>
        <dbReference type="PROSITE-ProRule" id="PRU00042"/>
    </source>
</evidence>
<evidence type="ECO:0000255" key="4">
    <source>
        <dbReference type="PROSITE-ProRule" id="PRU00187"/>
    </source>
</evidence>
<evidence type="ECO:0000305" key="5"/>
<reference key="1">
    <citation type="submission" date="2006-08" db="EMBL/GenBank/DDBJ databases">
        <title>Positive selection in transcription factor genes on the human lineage.</title>
        <authorList>
            <person name="Nickel G.C."/>
            <person name="Tefft D.L."/>
            <person name="Trevarthen K."/>
            <person name="Funt J."/>
            <person name="Adams M.D."/>
        </authorList>
    </citation>
    <scope>NUCLEOTIDE SEQUENCE [GENOMIC DNA]</scope>
</reference>
<keyword id="KW-0238">DNA-binding</keyword>
<keyword id="KW-1017">Isopeptide bond</keyword>
<keyword id="KW-0479">Metal-binding</keyword>
<keyword id="KW-0539">Nucleus</keyword>
<keyword id="KW-0597">Phosphoprotein</keyword>
<keyword id="KW-1185">Reference proteome</keyword>
<keyword id="KW-0677">Repeat</keyword>
<keyword id="KW-0678">Repressor</keyword>
<keyword id="KW-0804">Transcription</keyword>
<keyword id="KW-0805">Transcription regulation</keyword>
<keyword id="KW-0832">Ubl conjugation</keyword>
<keyword id="KW-0862">Zinc</keyword>
<keyword id="KW-0863">Zinc-finger</keyword>